<accession>P64159</accession>
<accession>A0A1R3Y1I4</accession>
<accession>O53191</accession>
<accession>X2BKL9</accession>
<sequence length="268" mass="29714">MPEGHTLHRLARLHQRRFAGAPVSVSSPQGRFADSASALNGRVLRRASAWGKHLFHHYVGGPVVHVHLGLYGTFTEWARPTDGWLPEPAGQVRMRMVGAEFGTDLRGPTVCESIDDGEVADVVARLGPDPLRSDANPSSAWSRITKSRRPIGALLMDQTVIAGVGNVYRNELLFRHRIDPQRPGRGIGEPEFDAAWNDLVSLMKVGLRRGKIIVVRPEHDHGLPSYLPDRPRTYVYRRAGEPCRVCGGVIRTALLEGRNVFWCPVCQT</sequence>
<evidence type="ECO:0000250" key="1"/>
<evidence type="ECO:0000255" key="2">
    <source>
        <dbReference type="PROSITE-ProRule" id="PRU00391"/>
    </source>
</evidence>
<evidence type="ECO:0000305" key="3"/>
<name>END8A_MYCBO</name>
<organism>
    <name type="scientific">Mycobacterium bovis (strain ATCC BAA-935 / AF2122/97)</name>
    <dbReference type="NCBI Taxonomy" id="233413"/>
    <lineage>
        <taxon>Bacteria</taxon>
        <taxon>Bacillati</taxon>
        <taxon>Actinomycetota</taxon>
        <taxon>Actinomycetes</taxon>
        <taxon>Mycobacteriales</taxon>
        <taxon>Mycobacteriaceae</taxon>
        <taxon>Mycobacterium</taxon>
        <taxon>Mycobacterium tuberculosis complex</taxon>
    </lineage>
</organism>
<comment type="function">
    <text evidence="1">Involved in base excision repair of DNA damaged by oxidation or by mutagenic agents. Acts as a DNA glycosylase that recognizes and removes damaged bases. Has AP (apurinic/apyrimidinic) lyase activity and introduces nicks in the DNA strand. Cleaves the DNA backbone by beta-delta elimination to generate a single-strand break at the site of the removed base with both 3'- and 5'-phosphates (By similarity).</text>
</comment>
<comment type="catalytic activity">
    <reaction>
        <text>2'-deoxyribonucleotide-(2'-deoxyribose 5'-phosphate)-2'-deoxyribonucleotide-DNA = a 3'-end 2'-deoxyribonucleotide-(2,3-dehydro-2,3-deoxyribose 5'-phosphate)-DNA + a 5'-end 5'-phospho-2'-deoxyribonucleoside-DNA + H(+)</text>
        <dbReference type="Rhea" id="RHEA:66592"/>
        <dbReference type="Rhea" id="RHEA-COMP:13180"/>
        <dbReference type="Rhea" id="RHEA-COMP:16897"/>
        <dbReference type="Rhea" id="RHEA-COMP:17067"/>
        <dbReference type="ChEBI" id="CHEBI:15378"/>
        <dbReference type="ChEBI" id="CHEBI:136412"/>
        <dbReference type="ChEBI" id="CHEBI:157695"/>
        <dbReference type="ChEBI" id="CHEBI:167181"/>
        <dbReference type="EC" id="4.2.99.18"/>
    </reaction>
</comment>
<comment type="cofactor">
    <cofactor evidence="2">
        <name>Zn(2+)</name>
        <dbReference type="ChEBI" id="CHEBI:29105"/>
    </cofactor>
    <text evidence="2">Binds 1 zinc ion per subunit.</text>
</comment>
<comment type="similarity">
    <text evidence="3">Belongs to the FPG family.</text>
</comment>
<reference key="1">
    <citation type="journal article" date="2003" name="Proc. Natl. Acad. Sci. U.S.A.">
        <title>The complete genome sequence of Mycobacterium bovis.</title>
        <authorList>
            <person name="Garnier T."/>
            <person name="Eiglmeier K."/>
            <person name="Camus J.-C."/>
            <person name="Medina N."/>
            <person name="Mansoor H."/>
            <person name="Pryor M."/>
            <person name="Duthoy S."/>
            <person name="Grondin S."/>
            <person name="Lacroix C."/>
            <person name="Monsempe C."/>
            <person name="Simon S."/>
            <person name="Harris B."/>
            <person name="Atkin R."/>
            <person name="Doggett J."/>
            <person name="Mayes R."/>
            <person name="Keating L."/>
            <person name="Wheeler P.R."/>
            <person name="Parkhill J."/>
            <person name="Barrell B.G."/>
            <person name="Cole S.T."/>
            <person name="Gordon S.V."/>
            <person name="Hewinson R.G."/>
        </authorList>
    </citation>
    <scope>NUCLEOTIDE SEQUENCE [LARGE SCALE GENOMIC DNA]</scope>
    <source>
        <strain>ATCC BAA-935 / AF2122/97</strain>
    </source>
</reference>
<reference key="2">
    <citation type="journal article" date="2017" name="Genome Announc.">
        <title>Updated reference genome sequence and annotation of Mycobacterium bovis AF2122/97.</title>
        <authorList>
            <person name="Malone K.M."/>
            <person name="Farrell D."/>
            <person name="Stuber T.P."/>
            <person name="Schubert O.T."/>
            <person name="Aebersold R."/>
            <person name="Robbe-Austerman S."/>
            <person name="Gordon S.V."/>
        </authorList>
    </citation>
    <scope>NUCLEOTIDE SEQUENCE [LARGE SCALE GENOMIC DNA]</scope>
    <scope>GENOME REANNOTATION</scope>
    <source>
        <strain>ATCC BAA-935 / AF2122/97</strain>
    </source>
</reference>
<proteinExistence type="inferred from homology"/>
<gene>
    <name type="primary">nei1</name>
    <name type="ordered locus">BQ2027_MB2491C</name>
</gene>
<feature type="initiator methionine" description="Removed" evidence="1">
    <location>
        <position position="1"/>
    </location>
</feature>
<feature type="chain" id="PRO_0000170904" description="Endonuclease 8 1">
    <location>
        <begin position="2"/>
        <end position="268"/>
    </location>
</feature>
<feature type="zinc finger region" description="FPG-type" evidence="2">
    <location>
        <begin position="234"/>
        <end position="268"/>
    </location>
</feature>
<feature type="active site" description="Schiff-base intermediate with DNA" evidence="1">
    <location>
        <position position="2"/>
    </location>
</feature>
<feature type="active site" description="Proton donor" evidence="1">
    <location>
        <position position="3"/>
    </location>
</feature>
<feature type="active site" description="Proton donor; for beta-elimination activity" evidence="1">
    <location>
        <position position="52"/>
    </location>
</feature>
<feature type="active site" description="Proton donor; for delta-elimination activity" evidence="1">
    <location>
        <position position="258"/>
    </location>
</feature>
<feature type="binding site" evidence="1">
    <location>
        <position position="125"/>
    </location>
    <ligand>
        <name>DNA</name>
        <dbReference type="ChEBI" id="CHEBI:16991"/>
    </ligand>
</feature>
<feature type="binding site" evidence="1">
    <location>
        <position position="166"/>
    </location>
    <ligand>
        <name>DNA</name>
        <dbReference type="ChEBI" id="CHEBI:16991"/>
    </ligand>
</feature>
<dbReference type="EC" id="3.2.2.-"/>
<dbReference type="EC" id="4.2.99.18"/>
<dbReference type="EMBL" id="LT708304">
    <property type="protein sequence ID" value="SIU01106.1"/>
    <property type="molecule type" value="Genomic_DNA"/>
</dbReference>
<dbReference type="RefSeq" id="NP_856138.1">
    <property type="nucleotide sequence ID" value="NC_002945.3"/>
</dbReference>
<dbReference type="RefSeq" id="WP_003412657.1">
    <property type="nucleotide sequence ID" value="NC_002945.4"/>
</dbReference>
<dbReference type="SMR" id="P64159"/>
<dbReference type="KEGG" id="mbo:BQ2027_MB2491C"/>
<dbReference type="PATRIC" id="fig|233413.5.peg.2742"/>
<dbReference type="Proteomes" id="UP000001419">
    <property type="component" value="Chromosome"/>
</dbReference>
<dbReference type="GO" id="GO:0140078">
    <property type="term" value="F:class I DNA-(apurinic or apyrimidinic site) endonuclease activity"/>
    <property type="evidence" value="ECO:0007669"/>
    <property type="project" value="UniProtKB-EC"/>
</dbReference>
<dbReference type="GO" id="GO:0003684">
    <property type="term" value="F:damaged DNA binding"/>
    <property type="evidence" value="ECO:0007669"/>
    <property type="project" value="InterPro"/>
</dbReference>
<dbReference type="GO" id="GO:0000703">
    <property type="term" value="F:oxidized pyrimidine nucleobase lesion DNA N-glycosylase activity"/>
    <property type="evidence" value="ECO:0007669"/>
    <property type="project" value="TreeGrafter"/>
</dbReference>
<dbReference type="GO" id="GO:0008270">
    <property type="term" value="F:zinc ion binding"/>
    <property type="evidence" value="ECO:0007669"/>
    <property type="project" value="UniProtKB-KW"/>
</dbReference>
<dbReference type="GO" id="GO:0006284">
    <property type="term" value="P:base-excision repair"/>
    <property type="evidence" value="ECO:0007669"/>
    <property type="project" value="InterPro"/>
</dbReference>
<dbReference type="CDD" id="cd08970">
    <property type="entry name" value="AcNei1_N"/>
    <property type="match status" value="1"/>
</dbReference>
<dbReference type="FunFam" id="3.20.190.10:FF:000007">
    <property type="entry name" value="DNA glycosylase"/>
    <property type="match status" value="1"/>
</dbReference>
<dbReference type="FunFam" id="1.10.8.50:FF:000003">
    <property type="entry name" value="Formamidopyrimidine-DNA glycosylase"/>
    <property type="match status" value="1"/>
</dbReference>
<dbReference type="Gene3D" id="1.10.8.50">
    <property type="match status" value="1"/>
</dbReference>
<dbReference type="Gene3D" id="3.20.190.10">
    <property type="entry name" value="MutM-like, N-terminal"/>
    <property type="match status" value="1"/>
</dbReference>
<dbReference type="InterPro" id="IPR015886">
    <property type="entry name" value="DNA_glyclase/AP_lyase_DNA-bd"/>
</dbReference>
<dbReference type="InterPro" id="IPR015887">
    <property type="entry name" value="DNA_glyclase_Znf_dom_DNA_BS"/>
</dbReference>
<dbReference type="InterPro" id="IPR012319">
    <property type="entry name" value="FPG_cat"/>
</dbReference>
<dbReference type="InterPro" id="IPR035937">
    <property type="entry name" value="MutM-like_N-ter"/>
</dbReference>
<dbReference type="InterPro" id="IPR010979">
    <property type="entry name" value="Ribosomal_uS13-like_H2TH"/>
</dbReference>
<dbReference type="InterPro" id="IPR000214">
    <property type="entry name" value="Znf_DNA_glyclase/AP_lyase"/>
</dbReference>
<dbReference type="InterPro" id="IPR010663">
    <property type="entry name" value="Znf_FPG/IleRS"/>
</dbReference>
<dbReference type="PANTHER" id="PTHR42697">
    <property type="entry name" value="ENDONUCLEASE 8"/>
    <property type="match status" value="1"/>
</dbReference>
<dbReference type="PANTHER" id="PTHR42697:SF3">
    <property type="entry name" value="ENDONUCLEASE 8 1"/>
    <property type="match status" value="1"/>
</dbReference>
<dbReference type="Pfam" id="PF01149">
    <property type="entry name" value="Fapy_DNA_glyco"/>
    <property type="match status" value="1"/>
</dbReference>
<dbReference type="Pfam" id="PF06831">
    <property type="entry name" value="H2TH"/>
    <property type="match status" value="1"/>
</dbReference>
<dbReference type="Pfam" id="PF06827">
    <property type="entry name" value="zf-FPG_IleRS"/>
    <property type="match status" value="1"/>
</dbReference>
<dbReference type="SMART" id="SM00898">
    <property type="entry name" value="Fapy_DNA_glyco"/>
    <property type="match status" value="1"/>
</dbReference>
<dbReference type="SMART" id="SM01232">
    <property type="entry name" value="H2TH"/>
    <property type="match status" value="1"/>
</dbReference>
<dbReference type="SUPFAM" id="SSF57716">
    <property type="entry name" value="Glucocorticoid receptor-like (DNA-binding domain)"/>
    <property type="match status" value="1"/>
</dbReference>
<dbReference type="SUPFAM" id="SSF81624">
    <property type="entry name" value="N-terminal domain of MutM-like DNA repair proteins"/>
    <property type="match status" value="1"/>
</dbReference>
<dbReference type="SUPFAM" id="SSF46946">
    <property type="entry name" value="S13-like H2TH domain"/>
    <property type="match status" value="1"/>
</dbReference>
<dbReference type="PROSITE" id="PS01242">
    <property type="entry name" value="ZF_FPG_1"/>
    <property type="match status" value="1"/>
</dbReference>
<dbReference type="PROSITE" id="PS51066">
    <property type="entry name" value="ZF_FPG_2"/>
    <property type="match status" value="1"/>
</dbReference>
<protein>
    <recommendedName>
        <fullName>Endonuclease 8 1</fullName>
    </recommendedName>
    <alternativeName>
        <fullName>DNA glycosylase/AP lyase Nei 1</fullName>
        <ecNumber>3.2.2.-</ecNumber>
    </alternativeName>
    <alternativeName>
        <fullName>DNA-(apurinic or apyrimidinic site) lyase Nei 1</fullName>
        <ecNumber>4.2.99.18</ecNumber>
    </alternativeName>
    <alternativeName>
        <fullName>Endonuclease VIII 1</fullName>
    </alternativeName>
</protein>
<keyword id="KW-0227">DNA damage</keyword>
<keyword id="KW-0234">DNA repair</keyword>
<keyword id="KW-0238">DNA-binding</keyword>
<keyword id="KW-0326">Glycosidase</keyword>
<keyword id="KW-0378">Hydrolase</keyword>
<keyword id="KW-0456">Lyase</keyword>
<keyword id="KW-0479">Metal-binding</keyword>
<keyword id="KW-0511">Multifunctional enzyme</keyword>
<keyword id="KW-1185">Reference proteome</keyword>
<keyword id="KW-0862">Zinc</keyword>
<keyword id="KW-0863">Zinc-finger</keyword>